<evidence type="ECO:0000255" key="1">
    <source>
        <dbReference type="HAMAP-Rule" id="MF_01867"/>
    </source>
</evidence>
<sequence>MDCKVVSLNEKDQFIPKIKSSDPVITGLFQYDAAQQTSFEKRMSKENNGREAALANVIREYMSDLKLSNEQELNIQHLANGSKVVIGGQQAGLFGGPLYTFHKIFSIITLSKELTDTHKQQVVPVFWIAGEDHDFDEVNHTFVYNENHGSLHKVKYHTMEMPETTVSRYYPDKAELKQTLKTMFIHMKETVHTQGLLEICDRIIDQYDSWTDMFKALLHETFKAYGVLFIDAQFEPLRKMEAPMFKKILKKHQLLDDAFRATQQRTQNQGLNAMIQTDTNVHLFLHDENMRQLVSYDGKHFKLNKTDKTYIKEEIINIAENQPELFSNNVVTRPLMEEWLFNTVAFVGGPSEIKYWAELKDVFELFDVEMPIVMPRLRITYLNDRIEKLLSKYNIPLEKVLVDGVEGERSKFIREQASHQFIEKVEGMIEQQRRLNKDLLDEVAGNQNNINLVNKNNEIHIQQYDYLLKRYLLNIERENDISMKQFREIQETLHPMGGLQERIWNPLQILNDFGTDVFKPSTYPPLSYTFDHIIIKP</sequence>
<comment type="function">
    <text evidence="1">Involved in bacillithiol (BSH) biosynthesis. May catalyze the last step of the pathway, the addition of cysteine to glucosamine malate (GlcN-Mal) to generate BSH.</text>
</comment>
<comment type="similarity">
    <text evidence="1">Belongs to the BshC family.</text>
</comment>
<dbReference type="EC" id="6.-.-.-" evidence="1"/>
<dbReference type="EMBL" id="AP009324">
    <property type="protein sequence ID" value="BAF78050.1"/>
    <property type="molecule type" value="Genomic_DNA"/>
</dbReference>
<dbReference type="RefSeq" id="WP_000340465.1">
    <property type="nucleotide sequence ID" value="NC_009782.1"/>
</dbReference>
<dbReference type="SMR" id="A7X1B5"/>
<dbReference type="KEGG" id="saw:SAHV_1167"/>
<dbReference type="HOGENOM" id="CLU_022249_0_0_9"/>
<dbReference type="GO" id="GO:0016874">
    <property type="term" value="F:ligase activity"/>
    <property type="evidence" value="ECO:0007669"/>
    <property type="project" value="UniProtKB-UniRule"/>
</dbReference>
<dbReference type="HAMAP" id="MF_01867">
    <property type="entry name" value="BshC"/>
    <property type="match status" value="1"/>
</dbReference>
<dbReference type="InterPro" id="IPR011199">
    <property type="entry name" value="Bacillithiol_biosynth_BshC"/>
</dbReference>
<dbReference type="InterPro" id="IPR055399">
    <property type="entry name" value="CC_BshC"/>
</dbReference>
<dbReference type="InterPro" id="IPR055398">
    <property type="entry name" value="Rossmann-like_BshC"/>
</dbReference>
<dbReference type="NCBIfam" id="TIGR03998">
    <property type="entry name" value="thiol_BshC"/>
    <property type="match status" value="1"/>
</dbReference>
<dbReference type="Pfam" id="PF24850">
    <property type="entry name" value="CC_BshC"/>
    <property type="match status" value="1"/>
</dbReference>
<dbReference type="Pfam" id="PF10079">
    <property type="entry name" value="Rossmann-like_BshC"/>
    <property type="match status" value="1"/>
</dbReference>
<dbReference type="PIRSF" id="PIRSF012535">
    <property type="entry name" value="UCP012535"/>
    <property type="match status" value="1"/>
</dbReference>
<organism>
    <name type="scientific">Staphylococcus aureus (strain Mu3 / ATCC 700698)</name>
    <dbReference type="NCBI Taxonomy" id="418127"/>
    <lineage>
        <taxon>Bacteria</taxon>
        <taxon>Bacillati</taxon>
        <taxon>Bacillota</taxon>
        <taxon>Bacilli</taxon>
        <taxon>Bacillales</taxon>
        <taxon>Staphylococcaceae</taxon>
        <taxon>Staphylococcus</taxon>
    </lineage>
</organism>
<proteinExistence type="inferred from homology"/>
<feature type="chain" id="PRO_0000378258" description="Putative cysteine ligase BshC">
    <location>
        <begin position="1"/>
        <end position="537"/>
    </location>
</feature>
<feature type="coiled-coil region" evidence="1">
    <location>
        <begin position="422"/>
        <end position="450"/>
    </location>
</feature>
<reference key="1">
    <citation type="journal article" date="2008" name="Antimicrob. Agents Chemother.">
        <title>Mutated response regulator graR is responsible for phenotypic conversion of Staphylococcus aureus from heterogeneous vancomycin-intermediate resistance to vancomycin-intermediate resistance.</title>
        <authorList>
            <person name="Neoh H.-M."/>
            <person name="Cui L."/>
            <person name="Yuzawa H."/>
            <person name="Takeuchi F."/>
            <person name="Matsuo M."/>
            <person name="Hiramatsu K."/>
        </authorList>
    </citation>
    <scope>NUCLEOTIDE SEQUENCE [LARGE SCALE GENOMIC DNA]</scope>
    <source>
        <strain>Mu3 / ATCC 700698</strain>
    </source>
</reference>
<protein>
    <recommendedName>
        <fullName evidence="1">Putative cysteine ligase BshC</fullName>
        <ecNumber evidence="1">6.-.-.-</ecNumber>
    </recommendedName>
</protein>
<keyword id="KW-0175">Coiled coil</keyword>
<keyword id="KW-0436">Ligase</keyword>
<accession>A7X1B5</accession>
<name>BSHC_STAA1</name>
<gene>
    <name evidence="1" type="primary">bshC</name>
    <name type="ordered locus">SAHV_1167</name>
</gene>